<keyword id="KW-0024">Alternative initiation</keyword>
<keyword id="KW-0025">Alternative splicing</keyword>
<keyword id="KW-0067">ATP-binding</keyword>
<keyword id="KW-0347">Helicase</keyword>
<keyword id="KW-0378">Hydrolase</keyword>
<keyword id="KW-0413">Isomerase</keyword>
<keyword id="KW-0488">Methylation</keyword>
<keyword id="KW-0547">Nucleotide-binding</keyword>
<keyword id="KW-0539">Nucleus</keyword>
<keyword id="KW-1267">Proteomics identification</keyword>
<keyword id="KW-1185">Reference proteome</keyword>
<keyword id="KW-0694">RNA-binding</keyword>
<name>DDX31_HUMAN</name>
<protein>
    <recommendedName>
        <fullName>ATP-dependent DNA helicase DDX31</fullName>
        <ecNumber evidence="1">5.6.2.-</ecNumber>
    </recommendedName>
    <alternativeName>
        <fullName>DEAD box protein 31</fullName>
    </alternativeName>
    <alternativeName>
        <fullName>Helicain</fullName>
    </alternativeName>
    <alternativeName>
        <fullName evidence="12">Probable ATP-dependent RNA helicase DDX31</fullName>
        <ecNumber evidence="1">3.6.4.13</ecNumber>
    </alternativeName>
</protein>
<gene>
    <name evidence="13" type="primary">DDX31</name>
</gene>
<comment type="function">
    <text evidence="1 8">May have DNA helicase activity and RNA helicase activity. Probably have ssDNA and RNA dependent ATPase activity (By similarity). Plays a role in ribosome biogenesis and TP53/p53 regulation through its interaction with NPM1 (PubMed:23019224).</text>
</comment>
<comment type="catalytic activity">
    <reaction evidence="1">
        <text>ATP + H2O = ADP + phosphate + H(+)</text>
        <dbReference type="Rhea" id="RHEA:13065"/>
        <dbReference type="ChEBI" id="CHEBI:15377"/>
        <dbReference type="ChEBI" id="CHEBI:15378"/>
        <dbReference type="ChEBI" id="CHEBI:30616"/>
        <dbReference type="ChEBI" id="CHEBI:43474"/>
        <dbReference type="ChEBI" id="CHEBI:456216"/>
        <dbReference type="EC" id="3.6.4.13"/>
    </reaction>
    <physiologicalReaction direction="left-to-right" evidence="1">
        <dbReference type="Rhea" id="RHEA:13066"/>
    </physiologicalReaction>
</comment>
<comment type="subunit">
    <text evidence="8">Interacts with NPM1; this interaction prevents interaction between NPM1 and HDM2.</text>
</comment>
<comment type="interaction">
    <interactant intactId="EBI-395655">
        <id>Q9H8H2</id>
    </interactant>
    <interactant intactId="EBI-353399">
        <id>P37108</id>
        <label>SRP14</label>
    </interactant>
    <organismsDiffer>false</organismsDiffer>
    <experiments>3</experiments>
</comment>
<comment type="subcellular location">
    <subcellularLocation>
        <location evidence="5 8">Nucleus</location>
        <location evidence="5 8">Nucleolus</location>
    </subcellularLocation>
    <text evidence="8">Colocalized with NPM1 in the nucleoli.</text>
</comment>
<comment type="alternative products">
    <event type="alternative splicing"/>
    <event type="alternative initiation"/>
    <isoform>
        <id>Q9H8H2-1</id>
        <name>1</name>
        <name>Helicain B</name>
        <sequence type="displayed"/>
    </isoform>
    <isoform>
        <id>Q9H8H2-2</id>
        <name>2</name>
        <name>Helicain C</name>
        <sequence type="described" ref="VSP_014790"/>
    </isoform>
    <isoform>
        <id>Q9H8H2-3</id>
        <name>3</name>
        <name>Helicain A</name>
        <sequence type="described" ref="VSP_014787 VSP_014788"/>
    </isoform>
    <isoform>
        <id>Q9H8H2-4</id>
        <name>4</name>
        <sequence type="described" ref="VSP_014789"/>
    </isoform>
    <isoform>
        <id>Q9H8H2-5</id>
        <name>5</name>
        <sequence type="described" ref="VSP_062268"/>
    </isoform>
    <isoform>
        <id>Q9H8H2-6</id>
        <name>6</name>
        <sequence type="described" ref="VSP_062268 VSP_062269"/>
    </isoform>
</comment>
<comment type="tissue specificity">
    <text evidence="8">Weakly or undetectably expressed in normal organs. Up-regulated in renal cell carcinoma.</text>
</comment>
<comment type="similarity">
    <text evidence="12">Belongs to the DEAD box helicase family. DDX31/DBP7 subfamily.</text>
</comment>
<comment type="sequence caution" evidence="12">
    <conflict type="frameshift">
        <sequence resource="EMBL-CDS" id="AAQ14889"/>
    </conflict>
</comment>
<comment type="sequence caution" evidence="12">
    <conflict type="frameshift">
        <sequence resource="EMBL-CDS" id="AAQ14890"/>
    </conflict>
</comment>
<comment type="sequence caution" evidence="12">
    <conflict type="erroneous initiation">
        <sequence resource="EMBL-CDS" id="BAB14644"/>
    </conflict>
    <text>Truncated N-terminus.</text>
</comment>
<comment type="sequence caution" evidence="12">
    <conflict type="frameshift">
        <sequence resource="EMBL-CDS" id="BAB15620"/>
    </conflict>
</comment>
<accession>Q9H8H2</accession>
<accession>Q5K6N2</accession>
<accession>Q5K6N3</accession>
<accession>Q5K6N4</accession>
<accession>Q5VZJ4</accession>
<accession>Q5VZJ9</accession>
<accession>Q96E91</accession>
<accession>Q96NY2</accession>
<accession>Q96SX5</accession>
<accession>Q9H5K6</accession>
<sequence length="851" mass="94087">MAPDLASQRHSESFPSVNSRPNVILPGREGRREGLPPGGGTRGSLVPTRPVPPSPAPLGTSPYSWSRSGPGRGGGAGSSRVPRGVPGPAVCAPGSLLHHASPTQTMAAADGSLFDNPRTFSRRPPAQASRQAKATKRKYQASSEAPPAKRRNETSFLPAKKTSVKETQRTFKGNAQKMFSPKKHSVSTSDRNQEERQCIKTSSLFKNNPDIPELHRPVVKQVQEKVFTSAAFHELGLHPHLISTINTVLKMSSMTSVQKQSIPVLLEGRDALVRSQTGSGKTLAYCIPVVQSLQAMESKIQRSDGPYALVLVPTRELALQSFDTVQKLLKPFTWIVPGVLMGGEKRKSEKARLRKGINILISTPGRLVDHIKSTKNIHFSRLRWLVFDEADRILDLGFEKDITVILNAVNAECQKRQNVLLSATLTEGVTRLADISLHDPVSISVLDKSHDQLNPKDKAVQEVCPPPAGDKLDSFAIPESLKQHVTVVPSKLRLVCLAAFILQKCKFEEDQKMVVFFSSCELVEFHYSLFLQTLLSSSGAPASGQLPSASMRLKFLRLHGGMEQEERTAVFQEFSHSRRGVLLCTDVAARGLDLPQVTWIVQYNAPSSPAEYIHRIGRTARIGCHGSSLLILAPSEAEYVNSLASHKINVSEIKMEDILCVLTRDDCFKGKRWGAQKSHAVGPQEIRERATVLQTVFEDYVHSSERRVSWAKKALQSFIQAYATYPRELKHIFHVRSLHLGHVAKSFGLRDAPRNLSALTRKKRKAHVKRPDLHKKTQSKHSLAEILRSEYSSGMEADIAKVKKQNAPGEPGGRPLQHSLQPTPCFGRGKTLKWRKTQKGVQRDSKTSQKV</sequence>
<dbReference type="EC" id="5.6.2.-" evidence="1"/>
<dbReference type="EC" id="3.6.4.13" evidence="1"/>
<dbReference type="EMBL" id="AF427339">
    <property type="protein sequence ID" value="AAL26549.1"/>
    <property type="molecule type" value="mRNA"/>
</dbReference>
<dbReference type="EMBL" id="AF335567">
    <property type="protein sequence ID" value="AAQ14888.1"/>
    <property type="molecule type" value="mRNA"/>
</dbReference>
<dbReference type="EMBL" id="AF335568">
    <property type="protein sequence ID" value="AAQ14889.1"/>
    <property type="status" value="ALT_FRAME"/>
    <property type="molecule type" value="mRNA"/>
</dbReference>
<dbReference type="EMBL" id="AF335569">
    <property type="protein sequence ID" value="AAQ14890.1"/>
    <property type="status" value="ALT_FRAME"/>
    <property type="molecule type" value="mRNA"/>
</dbReference>
<dbReference type="EMBL" id="AK023695">
    <property type="protein sequence ID" value="BAB14644.1"/>
    <property type="status" value="ALT_INIT"/>
    <property type="molecule type" value="mRNA"/>
</dbReference>
<dbReference type="EMBL" id="AK027002">
    <property type="protein sequence ID" value="BAB15620.1"/>
    <property type="status" value="ALT_FRAME"/>
    <property type="molecule type" value="mRNA"/>
</dbReference>
<dbReference type="EMBL" id="AK027484">
    <property type="protein sequence ID" value="BAB55146.1"/>
    <property type="molecule type" value="mRNA"/>
</dbReference>
<dbReference type="EMBL" id="AL160165">
    <property type="status" value="NOT_ANNOTATED_CDS"/>
    <property type="molecule type" value="Genomic_DNA"/>
</dbReference>
<dbReference type="EMBL" id="AL354735">
    <property type="status" value="NOT_ANNOTATED_CDS"/>
    <property type="molecule type" value="Genomic_DNA"/>
</dbReference>
<dbReference type="EMBL" id="BC012726">
    <property type="protein sequence ID" value="AAH12726.2"/>
    <property type="molecule type" value="mRNA"/>
</dbReference>
<dbReference type="CCDS" id="CCDS6951.2">
    <molecule id="Q9H8H2-5"/>
</dbReference>
<dbReference type="CCDS" id="CCDS83433.2">
    <molecule id="Q9H8H2-6"/>
</dbReference>
<dbReference type="RefSeq" id="NP_001309269.1">
    <property type="nucleotide sequence ID" value="NM_001322340.1"/>
</dbReference>
<dbReference type="RefSeq" id="NP_001309273.2">
    <molecule id="Q9H8H2-6"/>
    <property type="nucleotide sequence ID" value="NM_001322344.2"/>
</dbReference>
<dbReference type="RefSeq" id="NP_073616.6">
    <molecule id="Q9H8H2-5"/>
    <property type="nucleotide sequence ID" value="NM_022779.8"/>
</dbReference>
<dbReference type="RefSeq" id="NP_619526.1">
    <property type="nucleotide sequence ID" value="NM_138620.1"/>
</dbReference>
<dbReference type="SMR" id="Q9H8H2"/>
<dbReference type="BioGRID" id="122302">
    <property type="interactions" value="286"/>
</dbReference>
<dbReference type="FunCoup" id="Q9H8H2">
    <property type="interactions" value="3664"/>
</dbReference>
<dbReference type="IntAct" id="Q9H8H2">
    <property type="interactions" value="216"/>
</dbReference>
<dbReference type="MINT" id="Q9H8H2"/>
<dbReference type="STRING" id="9606.ENSP00000361232"/>
<dbReference type="GlyGen" id="Q9H8H2">
    <property type="glycosylation" value="1 site, 1 N-linked glycan (1 site)"/>
</dbReference>
<dbReference type="iPTMnet" id="Q9H8H2"/>
<dbReference type="PhosphoSitePlus" id="Q9H8H2"/>
<dbReference type="SwissPalm" id="Q9H8H2"/>
<dbReference type="BioMuta" id="DDX31"/>
<dbReference type="DMDM" id="71153334"/>
<dbReference type="jPOST" id="Q9H8H2"/>
<dbReference type="MassIVE" id="Q9H8H2"/>
<dbReference type="PaxDb" id="9606-ENSP00000361232"/>
<dbReference type="PeptideAtlas" id="Q9H8H2"/>
<dbReference type="ProteomicsDB" id="81209">
    <molecule id="Q9H8H2-1"/>
</dbReference>
<dbReference type="ProteomicsDB" id="81210">
    <molecule id="Q9H8H2-2"/>
</dbReference>
<dbReference type="ProteomicsDB" id="81211">
    <molecule id="Q9H8H2-3"/>
</dbReference>
<dbReference type="ProteomicsDB" id="81212">
    <molecule id="Q9H8H2-4"/>
</dbReference>
<dbReference type="Pumba" id="Q9H8H2"/>
<dbReference type="Antibodypedia" id="18198">
    <property type="antibodies" value="65 antibodies from 17 providers"/>
</dbReference>
<dbReference type="DNASU" id="64794"/>
<dbReference type="Ensembl" id="ENST00000372159.8">
    <molecule id="Q9H8H2-5"/>
    <property type="protein sequence ID" value="ENSP00000361232.4"/>
    <property type="gene ID" value="ENSG00000125485.18"/>
</dbReference>
<dbReference type="Ensembl" id="ENST00000480876.3">
    <molecule id="Q9H8H2-6"/>
    <property type="protein sequence ID" value="ENSP00000479697.2"/>
    <property type="gene ID" value="ENSG00000125485.18"/>
</dbReference>
<dbReference type="GeneID" id="64794"/>
<dbReference type="KEGG" id="hsa:64794"/>
<dbReference type="MANE-Select" id="ENST00000372159.8">
    <molecule id="Q9H8H2-5"/>
    <property type="protein sequence ID" value="ENSP00000361232.4"/>
    <property type="RefSeq nucleotide sequence ID" value="NM_022779.9"/>
    <property type="RefSeq protein sequence ID" value="NP_073616.7"/>
</dbReference>
<dbReference type="UCSC" id="uc004cbq.1">
    <molecule id="Q9H8H2-1"/>
    <property type="organism name" value="human"/>
</dbReference>
<dbReference type="AGR" id="HGNC:16715"/>
<dbReference type="CTD" id="64794"/>
<dbReference type="DisGeNET" id="64794"/>
<dbReference type="GeneCards" id="DDX31"/>
<dbReference type="HGNC" id="HGNC:16715">
    <property type="gene designation" value="DDX31"/>
</dbReference>
<dbReference type="HPA" id="ENSG00000125485">
    <property type="expression patterns" value="Low tissue specificity"/>
</dbReference>
<dbReference type="MIM" id="616533">
    <property type="type" value="gene"/>
</dbReference>
<dbReference type="neXtProt" id="NX_Q9H8H2"/>
<dbReference type="OpenTargets" id="ENSG00000125485"/>
<dbReference type="PharmGKB" id="PA27218"/>
<dbReference type="VEuPathDB" id="HostDB:ENSG00000125485"/>
<dbReference type="eggNOG" id="KOG0348">
    <property type="taxonomic scope" value="Eukaryota"/>
</dbReference>
<dbReference type="GeneTree" id="ENSGT00550000075041"/>
<dbReference type="HOGENOM" id="CLU_003041_26_2_1"/>
<dbReference type="InParanoid" id="Q9H8H2"/>
<dbReference type="OMA" id="AVHIKAD"/>
<dbReference type="OrthoDB" id="422663at2759"/>
<dbReference type="PAN-GO" id="Q9H8H2">
    <property type="GO annotations" value="2 GO annotations based on evolutionary models"/>
</dbReference>
<dbReference type="PhylomeDB" id="Q9H8H2"/>
<dbReference type="TreeFam" id="TF323273"/>
<dbReference type="PathwayCommons" id="Q9H8H2"/>
<dbReference type="SignaLink" id="Q9H8H2"/>
<dbReference type="BioGRID-ORCS" id="64794">
    <property type="hits" value="18 hits in 1163 CRISPR screens"/>
</dbReference>
<dbReference type="CD-CODE" id="91857CE7">
    <property type="entry name" value="Nucleolus"/>
</dbReference>
<dbReference type="ChiTaRS" id="DDX31">
    <property type="organism name" value="human"/>
</dbReference>
<dbReference type="GeneWiki" id="DDX31"/>
<dbReference type="GenomeRNAi" id="64794"/>
<dbReference type="Pharos" id="Q9H8H2">
    <property type="development level" value="Tbio"/>
</dbReference>
<dbReference type="PRO" id="PR:Q9H8H2"/>
<dbReference type="Proteomes" id="UP000005640">
    <property type="component" value="Chromosome 9"/>
</dbReference>
<dbReference type="RNAct" id="Q9H8H2">
    <property type="molecule type" value="protein"/>
</dbReference>
<dbReference type="Bgee" id="ENSG00000125485">
    <property type="expression patterns" value="Expressed in primordial germ cell in gonad and 145 other cell types or tissues"/>
</dbReference>
<dbReference type="ExpressionAtlas" id="Q9H8H2">
    <property type="expression patterns" value="baseline and differential"/>
</dbReference>
<dbReference type="GO" id="GO:0005794">
    <property type="term" value="C:Golgi apparatus"/>
    <property type="evidence" value="ECO:0000314"/>
    <property type="project" value="HPA"/>
</dbReference>
<dbReference type="GO" id="GO:0043231">
    <property type="term" value="C:intracellular membrane-bounded organelle"/>
    <property type="evidence" value="ECO:0000314"/>
    <property type="project" value="HPA"/>
</dbReference>
<dbReference type="GO" id="GO:0005730">
    <property type="term" value="C:nucleolus"/>
    <property type="evidence" value="ECO:0000314"/>
    <property type="project" value="UniProtKB"/>
</dbReference>
<dbReference type="GO" id="GO:0005634">
    <property type="term" value="C:nucleus"/>
    <property type="evidence" value="ECO:0000318"/>
    <property type="project" value="GO_Central"/>
</dbReference>
<dbReference type="GO" id="GO:0005524">
    <property type="term" value="F:ATP binding"/>
    <property type="evidence" value="ECO:0007669"/>
    <property type="project" value="UniProtKB-KW"/>
</dbReference>
<dbReference type="GO" id="GO:0016887">
    <property type="term" value="F:ATP hydrolysis activity"/>
    <property type="evidence" value="ECO:0007669"/>
    <property type="project" value="RHEA"/>
</dbReference>
<dbReference type="GO" id="GO:0003723">
    <property type="term" value="F:RNA binding"/>
    <property type="evidence" value="ECO:0007005"/>
    <property type="project" value="UniProtKB"/>
</dbReference>
<dbReference type="GO" id="GO:0003724">
    <property type="term" value="F:RNA helicase activity"/>
    <property type="evidence" value="ECO:0007669"/>
    <property type="project" value="UniProtKB-EC"/>
</dbReference>
<dbReference type="GO" id="GO:0042254">
    <property type="term" value="P:ribosome biogenesis"/>
    <property type="evidence" value="ECO:0000315"/>
    <property type="project" value="UniProtKB"/>
</dbReference>
<dbReference type="CDD" id="cd17949">
    <property type="entry name" value="DEADc_DDX31"/>
    <property type="match status" value="1"/>
</dbReference>
<dbReference type="CDD" id="cd18787">
    <property type="entry name" value="SF2_C_DEAD"/>
    <property type="match status" value="1"/>
</dbReference>
<dbReference type="FunFam" id="3.40.50.300:FF:001399">
    <property type="entry name" value="RNA helicase"/>
    <property type="match status" value="1"/>
</dbReference>
<dbReference type="FunFam" id="3.40.50.300:FF:001466">
    <property type="entry name" value="RNA helicase"/>
    <property type="match status" value="1"/>
</dbReference>
<dbReference type="Gene3D" id="3.40.50.300">
    <property type="entry name" value="P-loop containing nucleotide triphosphate hydrolases"/>
    <property type="match status" value="2"/>
</dbReference>
<dbReference type="InterPro" id="IPR011545">
    <property type="entry name" value="DEAD/DEAH_box_helicase_dom"/>
</dbReference>
<dbReference type="InterPro" id="IPR014001">
    <property type="entry name" value="Helicase_ATP-bd"/>
</dbReference>
<dbReference type="InterPro" id="IPR001650">
    <property type="entry name" value="Helicase_C-like"/>
</dbReference>
<dbReference type="InterPro" id="IPR027417">
    <property type="entry name" value="P-loop_NTPase"/>
</dbReference>
<dbReference type="InterPro" id="IPR000629">
    <property type="entry name" value="RNA-helicase_DEAD-box_CS"/>
</dbReference>
<dbReference type="InterPro" id="IPR014014">
    <property type="entry name" value="RNA_helicase_DEAD_Q_motif"/>
</dbReference>
<dbReference type="InterPro" id="IPR025313">
    <property type="entry name" value="SPB4-like_CTE"/>
</dbReference>
<dbReference type="PANTHER" id="PTHR24031">
    <property type="entry name" value="RNA HELICASE"/>
    <property type="match status" value="1"/>
</dbReference>
<dbReference type="Pfam" id="PF13959">
    <property type="entry name" value="CTE_SPB4"/>
    <property type="match status" value="1"/>
</dbReference>
<dbReference type="Pfam" id="PF00270">
    <property type="entry name" value="DEAD"/>
    <property type="match status" value="1"/>
</dbReference>
<dbReference type="Pfam" id="PF00271">
    <property type="entry name" value="Helicase_C"/>
    <property type="match status" value="1"/>
</dbReference>
<dbReference type="SMART" id="SM00487">
    <property type="entry name" value="DEXDc"/>
    <property type="match status" value="1"/>
</dbReference>
<dbReference type="SMART" id="SM01178">
    <property type="entry name" value="DUF4217"/>
    <property type="match status" value="1"/>
</dbReference>
<dbReference type="SMART" id="SM00490">
    <property type="entry name" value="HELICc"/>
    <property type="match status" value="1"/>
</dbReference>
<dbReference type="SUPFAM" id="SSF52540">
    <property type="entry name" value="P-loop containing nucleoside triphosphate hydrolases"/>
    <property type="match status" value="1"/>
</dbReference>
<dbReference type="PROSITE" id="PS00039">
    <property type="entry name" value="DEAD_ATP_HELICASE"/>
    <property type="match status" value="1"/>
</dbReference>
<dbReference type="PROSITE" id="PS51192">
    <property type="entry name" value="HELICASE_ATP_BIND_1"/>
    <property type="match status" value="1"/>
</dbReference>
<dbReference type="PROSITE" id="PS51194">
    <property type="entry name" value="HELICASE_CTER"/>
    <property type="match status" value="1"/>
</dbReference>
<dbReference type="PROSITE" id="PS51195">
    <property type="entry name" value="Q_MOTIF"/>
    <property type="match status" value="1"/>
</dbReference>
<evidence type="ECO:0000250" key="1">
    <source>
        <dbReference type="UniProtKB" id="Q8IBN8"/>
    </source>
</evidence>
<evidence type="ECO:0000255" key="2">
    <source>
        <dbReference type="PROSITE-ProRule" id="PRU00541"/>
    </source>
</evidence>
<evidence type="ECO:0000255" key="3">
    <source>
        <dbReference type="PROSITE-ProRule" id="PRU00542"/>
    </source>
</evidence>
<evidence type="ECO:0000256" key="4">
    <source>
        <dbReference type="SAM" id="MobiDB-lite"/>
    </source>
</evidence>
<evidence type="ECO:0000269" key="5">
    <source>
    </source>
</evidence>
<evidence type="ECO:0000269" key="6">
    <source>
    </source>
</evidence>
<evidence type="ECO:0000269" key="7">
    <source>
    </source>
</evidence>
<evidence type="ECO:0000269" key="8">
    <source>
    </source>
</evidence>
<evidence type="ECO:0000269" key="9">
    <source ref="2"/>
</evidence>
<evidence type="ECO:0000303" key="10">
    <source>
    </source>
</evidence>
<evidence type="ECO:0000303" key="11">
    <source ref="2"/>
</evidence>
<evidence type="ECO:0000305" key="12"/>
<evidence type="ECO:0000312" key="13">
    <source>
        <dbReference type="HGNC" id="HGNC:16715"/>
    </source>
</evidence>
<evidence type="ECO:0007744" key="14">
    <source>
    </source>
</evidence>
<organism>
    <name type="scientific">Homo sapiens</name>
    <name type="common">Human</name>
    <dbReference type="NCBI Taxonomy" id="9606"/>
    <lineage>
        <taxon>Eukaryota</taxon>
        <taxon>Metazoa</taxon>
        <taxon>Chordata</taxon>
        <taxon>Craniata</taxon>
        <taxon>Vertebrata</taxon>
        <taxon>Euteleostomi</taxon>
        <taxon>Mammalia</taxon>
        <taxon>Eutheria</taxon>
        <taxon>Euarchontoglires</taxon>
        <taxon>Primates</taxon>
        <taxon>Haplorrhini</taxon>
        <taxon>Catarrhini</taxon>
        <taxon>Hominidae</taxon>
        <taxon>Homo</taxon>
    </lineage>
</organism>
<reference key="1">
    <citation type="journal article" date="2003" name="Genomics">
        <title>The human DDX and DHX gene families of putative RNA helicases.</title>
        <authorList>
            <person name="Abdelhaleem M."/>
            <person name="Maltais L."/>
            <person name="Wain H."/>
        </authorList>
    </citation>
    <scope>NUCLEOTIDE SEQUENCE [MRNA] (ISOFORM 1)</scope>
</reference>
<reference key="2">
    <citation type="submission" date="2001-01" db="EMBL/GenBank/DDBJ databases">
        <authorList>
            <person name="Sugihara T.T."/>
            <person name="Wadhwa R.R."/>
        </authorList>
    </citation>
    <scope>NUCLEOTIDE SEQUENCE [MRNA] (ISOFORMS 1; 2 AND 3)</scope>
    <scope>VARIANT VAL-799</scope>
</reference>
<reference key="3">
    <citation type="journal article" date="2004" name="Nat. Genet.">
        <title>Complete sequencing and characterization of 21,243 full-length human cDNAs.</title>
        <authorList>
            <person name="Ota T."/>
            <person name="Suzuki Y."/>
            <person name="Nishikawa T."/>
            <person name="Otsuki T."/>
            <person name="Sugiyama T."/>
            <person name="Irie R."/>
            <person name="Wakamatsu A."/>
            <person name="Hayashi K."/>
            <person name="Sato H."/>
            <person name="Nagai K."/>
            <person name="Kimura K."/>
            <person name="Makita H."/>
            <person name="Sekine M."/>
            <person name="Obayashi M."/>
            <person name="Nishi T."/>
            <person name="Shibahara T."/>
            <person name="Tanaka T."/>
            <person name="Ishii S."/>
            <person name="Yamamoto J."/>
            <person name="Saito K."/>
            <person name="Kawai Y."/>
            <person name="Isono Y."/>
            <person name="Nakamura Y."/>
            <person name="Nagahari K."/>
            <person name="Murakami K."/>
            <person name="Yasuda T."/>
            <person name="Iwayanagi T."/>
            <person name="Wagatsuma M."/>
            <person name="Shiratori A."/>
            <person name="Sudo H."/>
            <person name="Hosoiri T."/>
            <person name="Kaku Y."/>
            <person name="Kodaira H."/>
            <person name="Kondo H."/>
            <person name="Sugawara M."/>
            <person name="Takahashi M."/>
            <person name="Kanda K."/>
            <person name="Yokoi T."/>
            <person name="Furuya T."/>
            <person name="Kikkawa E."/>
            <person name="Omura Y."/>
            <person name="Abe K."/>
            <person name="Kamihara K."/>
            <person name="Katsuta N."/>
            <person name="Sato K."/>
            <person name="Tanikawa M."/>
            <person name="Yamazaki M."/>
            <person name="Ninomiya K."/>
            <person name="Ishibashi T."/>
            <person name="Yamashita H."/>
            <person name="Murakawa K."/>
            <person name="Fujimori K."/>
            <person name="Tanai H."/>
            <person name="Kimata M."/>
            <person name="Watanabe M."/>
            <person name="Hiraoka S."/>
            <person name="Chiba Y."/>
            <person name="Ishida S."/>
            <person name="Ono Y."/>
            <person name="Takiguchi S."/>
            <person name="Watanabe S."/>
            <person name="Yosida M."/>
            <person name="Hotuta T."/>
            <person name="Kusano J."/>
            <person name="Kanehori K."/>
            <person name="Takahashi-Fujii A."/>
            <person name="Hara H."/>
            <person name="Tanase T.-O."/>
            <person name="Nomura Y."/>
            <person name="Togiya S."/>
            <person name="Komai F."/>
            <person name="Hara R."/>
            <person name="Takeuchi K."/>
            <person name="Arita M."/>
            <person name="Imose N."/>
            <person name="Musashino K."/>
            <person name="Yuuki H."/>
            <person name="Oshima A."/>
            <person name="Sasaki N."/>
            <person name="Aotsuka S."/>
            <person name="Yoshikawa Y."/>
            <person name="Matsunawa H."/>
            <person name="Ichihara T."/>
            <person name="Shiohata N."/>
            <person name="Sano S."/>
            <person name="Moriya S."/>
            <person name="Momiyama H."/>
            <person name="Satoh N."/>
            <person name="Takami S."/>
            <person name="Terashima Y."/>
            <person name="Suzuki O."/>
            <person name="Nakagawa S."/>
            <person name="Senoh A."/>
            <person name="Mizoguchi H."/>
            <person name="Goto Y."/>
            <person name="Shimizu F."/>
            <person name="Wakebe H."/>
            <person name="Hishigaki H."/>
            <person name="Watanabe T."/>
            <person name="Sugiyama A."/>
            <person name="Takemoto M."/>
            <person name="Kawakami B."/>
            <person name="Yamazaki M."/>
            <person name="Watanabe K."/>
            <person name="Kumagai A."/>
            <person name="Itakura S."/>
            <person name="Fukuzumi Y."/>
            <person name="Fujimori Y."/>
            <person name="Komiyama M."/>
            <person name="Tashiro H."/>
            <person name="Tanigami A."/>
            <person name="Fujiwara T."/>
            <person name="Ono T."/>
            <person name="Yamada K."/>
            <person name="Fujii Y."/>
            <person name="Ozaki K."/>
            <person name="Hirao M."/>
            <person name="Ohmori Y."/>
            <person name="Kawabata A."/>
            <person name="Hikiji T."/>
            <person name="Kobatake N."/>
            <person name="Inagaki H."/>
            <person name="Ikema Y."/>
            <person name="Okamoto S."/>
            <person name="Okitani R."/>
            <person name="Kawakami T."/>
            <person name="Noguchi S."/>
            <person name="Itoh T."/>
            <person name="Shigeta K."/>
            <person name="Senba T."/>
            <person name="Matsumura K."/>
            <person name="Nakajima Y."/>
            <person name="Mizuno T."/>
            <person name="Morinaga M."/>
            <person name="Sasaki M."/>
            <person name="Togashi T."/>
            <person name="Oyama M."/>
            <person name="Hata H."/>
            <person name="Watanabe M."/>
            <person name="Komatsu T."/>
            <person name="Mizushima-Sugano J."/>
            <person name="Satoh T."/>
            <person name="Shirai Y."/>
            <person name="Takahashi Y."/>
            <person name="Nakagawa K."/>
            <person name="Okumura K."/>
            <person name="Nagase T."/>
            <person name="Nomura N."/>
            <person name="Kikuchi H."/>
            <person name="Masuho Y."/>
            <person name="Yamashita R."/>
            <person name="Nakai K."/>
            <person name="Yada T."/>
            <person name="Nakamura Y."/>
            <person name="Ohara O."/>
            <person name="Isogai T."/>
            <person name="Sugano S."/>
        </authorList>
    </citation>
    <scope>NUCLEOTIDE SEQUENCE [LARGE SCALE MRNA] (ISOFORM 4)</scope>
    <scope>NUCLEOTIDE SEQUENCE [LARGE SCALE MRNA] OF 90-851 (ISOFORM 1)</scope>
    <scope>VARIANT VAL-799</scope>
    <source>
        <tissue>Hepatoma</tissue>
        <tissue>Placenta</tissue>
        <tissue>Teratocarcinoma</tissue>
    </source>
</reference>
<reference key="4">
    <citation type="journal article" date="2004" name="Nature">
        <title>DNA sequence and analysis of human chromosome 9.</title>
        <authorList>
            <person name="Humphray S.J."/>
            <person name="Oliver K."/>
            <person name="Hunt A.R."/>
            <person name="Plumb R.W."/>
            <person name="Loveland J.E."/>
            <person name="Howe K.L."/>
            <person name="Andrews T.D."/>
            <person name="Searle S."/>
            <person name="Hunt S.E."/>
            <person name="Scott C.E."/>
            <person name="Jones M.C."/>
            <person name="Ainscough R."/>
            <person name="Almeida J.P."/>
            <person name="Ambrose K.D."/>
            <person name="Ashwell R.I.S."/>
            <person name="Babbage A.K."/>
            <person name="Babbage S."/>
            <person name="Bagguley C.L."/>
            <person name="Bailey J."/>
            <person name="Banerjee R."/>
            <person name="Barker D.J."/>
            <person name="Barlow K.F."/>
            <person name="Bates K."/>
            <person name="Beasley H."/>
            <person name="Beasley O."/>
            <person name="Bird C.P."/>
            <person name="Bray-Allen S."/>
            <person name="Brown A.J."/>
            <person name="Brown J.Y."/>
            <person name="Burford D."/>
            <person name="Burrill W."/>
            <person name="Burton J."/>
            <person name="Carder C."/>
            <person name="Carter N.P."/>
            <person name="Chapman J.C."/>
            <person name="Chen Y."/>
            <person name="Clarke G."/>
            <person name="Clark S.Y."/>
            <person name="Clee C.M."/>
            <person name="Clegg S."/>
            <person name="Collier R.E."/>
            <person name="Corby N."/>
            <person name="Crosier M."/>
            <person name="Cummings A.T."/>
            <person name="Davies J."/>
            <person name="Dhami P."/>
            <person name="Dunn M."/>
            <person name="Dutta I."/>
            <person name="Dyer L.W."/>
            <person name="Earthrowl M.E."/>
            <person name="Faulkner L."/>
            <person name="Fleming C.J."/>
            <person name="Frankish A."/>
            <person name="Frankland J.A."/>
            <person name="French L."/>
            <person name="Fricker D.G."/>
            <person name="Garner P."/>
            <person name="Garnett J."/>
            <person name="Ghori J."/>
            <person name="Gilbert J.G.R."/>
            <person name="Glison C."/>
            <person name="Grafham D.V."/>
            <person name="Gribble S."/>
            <person name="Griffiths C."/>
            <person name="Griffiths-Jones S."/>
            <person name="Grocock R."/>
            <person name="Guy J."/>
            <person name="Hall R.E."/>
            <person name="Hammond S."/>
            <person name="Harley J.L."/>
            <person name="Harrison E.S.I."/>
            <person name="Hart E.A."/>
            <person name="Heath P.D."/>
            <person name="Henderson C.D."/>
            <person name="Hopkins B.L."/>
            <person name="Howard P.J."/>
            <person name="Howden P.J."/>
            <person name="Huckle E."/>
            <person name="Johnson C."/>
            <person name="Johnson D."/>
            <person name="Joy A.A."/>
            <person name="Kay M."/>
            <person name="Keenan S."/>
            <person name="Kershaw J.K."/>
            <person name="Kimberley A.M."/>
            <person name="King A."/>
            <person name="Knights A."/>
            <person name="Laird G.K."/>
            <person name="Langford C."/>
            <person name="Lawlor S."/>
            <person name="Leongamornlert D.A."/>
            <person name="Leversha M."/>
            <person name="Lloyd C."/>
            <person name="Lloyd D.M."/>
            <person name="Lovell J."/>
            <person name="Martin S."/>
            <person name="Mashreghi-Mohammadi M."/>
            <person name="Matthews L."/>
            <person name="McLaren S."/>
            <person name="McLay K.E."/>
            <person name="McMurray A."/>
            <person name="Milne S."/>
            <person name="Nickerson T."/>
            <person name="Nisbett J."/>
            <person name="Nordsiek G."/>
            <person name="Pearce A.V."/>
            <person name="Peck A.I."/>
            <person name="Porter K.M."/>
            <person name="Pandian R."/>
            <person name="Pelan S."/>
            <person name="Phillimore B."/>
            <person name="Povey S."/>
            <person name="Ramsey Y."/>
            <person name="Rand V."/>
            <person name="Scharfe M."/>
            <person name="Sehra H.K."/>
            <person name="Shownkeen R."/>
            <person name="Sims S.K."/>
            <person name="Skuce C.D."/>
            <person name="Smith M."/>
            <person name="Steward C.A."/>
            <person name="Swarbreck D."/>
            <person name="Sycamore N."/>
            <person name="Tester J."/>
            <person name="Thorpe A."/>
            <person name="Tracey A."/>
            <person name="Tromans A."/>
            <person name="Thomas D.W."/>
            <person name="Wall M."/>
            <person name="Wallis J.M."/>
            <person name="West A.P."/>
            <person name="Whitehead S.L."/>
            <person name="Willey D.L."/>
            <person name="Williams S.A."/>
            <person name="Wilming L."/>
            <person name="Wray P.W."/>
            <person name="Young L."/>
            <person name="Ashurst J.L."/>
            <person name="Coulson A."/>
            <person name="Blocker H."/>
            <person name="Durbin R.M."/>
            <person name="Sulston J.E."/>
            <person name="Hubbard T."/>
            <person name="Jackson M.J."/>
            <person name="Bentley D.R."/>
            <person name="Beck S."/>
            <person name="Rogers J."/>
            <person name="Dunham I."/>
        </authorList>
    </citation>
    <scope>NUCLEOTIDE SEQUENCE [LARGE SCALE GENOMIC DNA]</scope>
</reference>
<reference key="5">
    <citation type="journal article" date="2004" name="Genome Res.">
        <title>The status, quality, and expansion of the NIH full-length cDNA project: the Mammalian Gene Collection (MGC).</title>
        <authorList>
            <consortium name="The MGC Project Team"/>
        </authorList>
    </citation>
    <scope>NUCLEOTIDE SEQUENCE [LARGE SCALE MRNA] OF 75-851 (ISOFORM 1)</scope>
    <scope>VARIANT VAL-799</scope>
    <source>
        <tissue>Lung</tissue>
    </source>
</reference>
<reference key="6">
    <citation type="journal article" date="2002" name="Mol. Biol. Cell">
        <title>Functional proteomic analysis of human nucleolus.</title>
        <authorList>
            <person name="Scherl A."/>
            <person name="Coute Y."/>
            <person name="Deon C."/>
            <person name="Calle A."/>
            <person name="Kindbeiter K."/>
            <person name="Sanchez J.-C."/>
            <person name="Greco A."/>
            <person name="Hochstrasser D.F."/>
            <person name="Diaz J.-J."/>
        </authorList>
    </citation>
    <scope>SUBCELLULAR LOCATION [LARGE SCALE ANALYSIS]</scope>
    <source>
        <tissue>Cervix carcinoma</tissue>
    </source>
</reference>
<reference key="7">
    <citation type="journal article" date="2012" name="Cancer Res.">
        <title>DDX31 regulates the p53-HDM2 pathway and rRNA gene transcription through its interaction with NPM1 in renal cell carcinomas.</title>
        <authorList>
            <person name="Fukawa T."/>
            <person name="Ono M."/>
            <person name="Matsuo T."/>
            <person name="Uehara H."/>
            <person name="Miki T."/>
            <person name="Nakamura Y."/>
            <person name="Kanayama H.O."/>
            <person name="Katagiri T."/>
        </authorList>
    </citation>
    <scope>TISSUE SPECIFICITY</scope>
    <scope>SUBCELLULAR LOCATION</scope>
    <scope>INTERACTION WITH NPM1</scope>
    <scope>FUNCTION</scope>
</reference>
<reference key="8">
    <citation type="journal article" date="2014" name="Mol. Cell. Proteomics">
        <title>Immunoaffinity enrichment and mass spectrometry analysis of protein methylation.</title>
        <authorList>
            <person name="Guo A."/>
            <person name="Gu H."/>
            <person name="Zhou J."/>
            <person name="Mulhern D."/>
            <person name="Wang Y."/>
            <person name="Lee K.A."/>
            <person name="Yang V."/>
            <person name="Aguiar M."/>
            <person name="Kornhauser J."/>
            <person name="Jia X."/>
            <person name="Ren J."/>
            <person name="Beausoleil S.A."/>
            <person name="Silva J.C."/>
            <person name="Vemulapalli V."/>
            <person name="Bedford M.T."/>
            <person name="Comb M.J."/>
        </authorList>
    </citation>
    <scope>METHYLATION [LARGE SCALE ANALYSIS] AT ARG-828</scope>
    <scope>IDENTIFICATION BY MASS SPECTROMETRY [LARGE SCALE ANALYSIS]</scope>
    <source>
        <tissue>Colon carcinoma</tissue>
    </source>
</reference>
<feature type="chain" id="PRO_0000055049" description="ATP-dependent DNA helicase DDX31">
    <location>
        <begin position="1"/>
        <end position="851"/>
    </location>
</feature>
<feature type="domain" description="Helicase ATP-binding" evidence="2">
    <location>
        <begin position="262"/>
        <end position="443"/>
    </location>
</feature>
<feature type="domain" description="Helicase C-terminal" evidence="3">
    <location>
        <begin position="480"/>
        <end position="659"/>
    </location>
</feature>
<feature type="region of interest" description="Disordered" evidence="4">
    <location>
        <begin position="1"/>
        <end position="196"/>
    </location>
</feature>
<feature type="region of interest" description="Disordered" evidence="4">
    <location>
        <begin position="762"/>
        <end position="784"/>
    </location>
</feature>
<feature type="region of interest" description="Disordered" evidence="4">
    <location>
        <begin position="804"/>
        <end position="851"/>
    </location>
</feature>
<feature type="short sequence motif" description="Q motif">
    <location>
        <begin position="230"/>
        <end position="259"/>
    </location>
</feature>
<feature type="short sequence motif" description="DEAD box">
    <location>
        <begin position="388"/>
        <end position="391"/>
    </location>
</feature>
<feature type="compositionally biased region" description="Basic and acidic residues" evidence="4">
    <location>
        <begin position="841"/>
        <end position="851"/>
    </location>
</feature>
<feature type="binding site" evidence="2">
    <location>
        <begin position="275"/>
        <end position="282"/>
    </location>
    <ligand>
        <name>ATP</name>
        <dbReference type="ChEBI" id="CHEBI:30616"/>
    </ligand>
</feature>
<feature type="modified residue" description="Omega-N-methylarginine" evidence="14">
    <location>
        <position position="828"/>
    </location>
</feature>
<feature type="splice variant" id="VSP_062268" description="In isoform 5 and isoform 6.">
    <location>
        <begin position="1"/>
        <end position="105"/>
    </location>
</feature>
<feature type="splice variant" id="VSP_062269" description="In isoform 6.">
    <original>RSDGPYALVLVPTRELALQSFDTVQKLLKPFTWIVPGVLMGGEKRKSEKARLRKGINILISTPGRLVDHIKSTKNIHFSRLRWLVFDEADRILDLGFEKDITVILNAVNAECQKRQNVLLSATLTEGVTRLADISLHDPVSISVLDKSHDQLNPKDKAVQEVCPPPAGDKLDSFAIPESLKQHVTVVPSKLRLVCLAAFILQKCKFEEDQKMVVFFSSCELVEFHYSLFLQTLLSSSGAPASGQLPSASMRLKFLRLHGGMEQEERTAVFQEFSHSRRGVLLCTDVAARGLDLPQVTWIVQYNAPSSPAEYIHRIGRTARIGCHGSSLLILAPSEAEYVNSLASHKINVSEIKMEDILCVLTRDDCFKGKRWGAQKSHAVGPQEIRERATVLQTVFEDYVHSSERRVSWAKKALQSFIQAYATYPRELKHIFHVRSLHLGHVAKSFGLRDAPRNLSALTRKKRKAHVKRPDLHKKTQSKHSLAEILRSEYSSGMEADIAKVKKQNAPGEPGGRPLQHSLQPTPCFGRGKTLKWRKTQKGVQRDSKTSQKV</original>
    <variation>VLLLSTFYEEEQRLRKVK</variation>
    <location>
        <begin position="302"/>
        <end position="851"/>
    </location>
</feature>
<feature type="splice variant" id="VSP_014787" description="In isoform 3." evidence="11">
    <original>RSDGPYALVLVPTRELAL</original>
    <variation>VLLLSTFYEEEQRLRKVK</variation>
    <location>
        <begin position="302"/>
        <end position="319"/>
    </location>
</feature>
<feature type="splice variant" id="VSP_014788" description="In isoform 3." evidence="11">
    <location>
        <begin position="320"/>
        <end position="851"/>
    </location>
</feature>
<feature type="splice variant" id="VSP_014789" description="In isoform 4." evidence="10">
    <location>
        <begin position="586"/>
        <end position="851"/>
    </location>
</feature>
<feature type="splice variant" id="VSP_014790" description="In isoform 2." evidence="11">
    <original>YNAPSSPAEYIHRIGRTARIGCHGSSLLILAPSEAEYVNSLASHKINVSEIKMEDILCVLTRDDCFKGKRWGAQKSHAVGPQEIRERATVLQTVFEDYVHSSERRVSWAKKA</original>
    <variation>NTSTGLEEPPGLAAMGAACSFWLLRRQNMSTRWLLTKST</variation>
    <location>
        <begin position="603"/>
        <end position="714"/>
    </location>
</feature>
<feature type="sequence variant" id="VAR_052164" description="In dbSNP:rs17402080.">
    <original>E</original>
    <variation>K</variation>
    <location>
        <position position="153"/>
    </location>
</feature>
<feature type="sequence variant" id="VAR_052165" description="In dbSNP:rs34246652.">
    <original>R</original>
    <variation>Q</variation>
    <location>
        <position position="687"/>
    </location>
</feature>
<feature type="sequence variant" id="VAR_023065" description="In dbSNP:rs306547." evidence="6 7 9">
    <original>I</original>
    <variation>V</variation>
    <location>
        <position position="799"/>
    </location>
</feature>
<feature type="sequence variant" id="VAR_023066" description="In dbSNP:rs306548.">
    <original>R</original>
    <variation>Q</variation>
    <location>
        <position position="843"/>
    </location>
</feature>
<feature type="sequence conflict" description="In Ref. 3; BAB15620." evidence="12" ref="3">
    <original>K</original>
    <variation>L</variation>
    <location>
        <position position="206"/>
    </location>
</feature>
<feature type="sequence conflict" description="In Ref. 3; BAB15620." evidence="12" ref="3">
    <original>L</original>
    <variation>P</variation>
    <location>
        <position position="406"/>
    </location>
</feature>
<feature type="sequence conflict" description="In Ref. 3; BAB15620." evidence="12" ref="3">
    <original>Y</original>
    <variation>C</variation>
    <location>
        <position position="527"/>
    </location>
</feature>
<feature type="sequence conflict" description="In Ref. 3; BAB55146." evidence="12" ref="3">
    <original>M</original>
    <variation>K</variation>
    <location>
        <position position="562"/>
    </location>
</feature>
<proteinExistence type="evidence at protein level"/>